<name>RLME_ALCBS</name>
<feature type="chain" id="PRO_0000282721" description="Ribosomal RNA large subunit methyltransferase E">
    <location>
        <begin position="1"/>
        <end position="208"/>
    </location>
</feature>
<feature type="active site" description="Proton acceptor" evidence="1">
    <location>
        <position position="164"/>
    </location>
</feature>
<feature type="binding site" evidence="1">
    <location>
        <position position="63"/>
    </location>
    <ligand>
        <name>S-adenosyl-L-methionine</name>
        <dbReference type="ChEBI" id="CHEBI:59789"/>
    </ligand>
</feature>
<feature type="binding site" evidence="1">
    <location>
        <position position="65"/>
    </location>
    <ligand>
        <name>S-adenosyl-L-methionine</name>
        <dbReference type="ChEBI" id="CHEBI:59789"/>
    </ligand>
</feature>
<feature type="binding site" evidence="1">
    <location>
        <position position="83"/>
    </location>
    <ligand>
        <name>S-adenosyl-L-methionine</name>
        <dbReference type="ChEBI" id="CHEBI:59789"/>
    </ligand>
</feature>
<feature type="binding site" evidence="1">
    <location>
        <position position="99"/>
    </location>
    <ligand>
        <name>S-adenosyl-L-methionine</name>
        <dbReference type="ChEBI" id="CHEBI:59789"/>
    </ligand>
</feature>
<feature type="binding site" evidence="1">
    <location>
        <position position="124"/>
    </location>
    <ligand>
        <name>S-adenosyl-L-methionine</name>
        <dbReference type="ChEBI" id="CHEBI:59789"/>
    </ligand>
</feature>
<reference key="1">
    <citation type="journal article" date="2006" name="Nat. Biotechnol.">
        <title>Genome sequence of the ubiquitous hydrocarbon-degrading marine bacterium Alcanivorax borkumensis.</title>
        <authorList>
            <person name="Schneiker S."/>
            <person name="Martins dos Santos V.A.P."/>
            <person name="Bartels D."/>
            <person name="Bekel T."/>
            <person name="Brecht M."/>
            <person name="Buhrmester J."/>
            <person name="Chernikova T.N."/>
            <person name="Denaro R."/>
            <person name="Ferrer M."/>
            <person name="Gertler C."/>
            <person name="Goesmann A."/>
            <person name="Golyshina O.V."/>
            <person name="Kaminski F."/>
            <person name="Khachane A.N."/>
            <person name="Lang S."/>
            <person name="Linke B."/>
            <person name="McHardy A.C."/>
            <person name="Meyer F."/>
            <person name="Nechitaylo T."/>
            <person name="Puehler A."/>
            <person name="Regenhardt D."/>
            <person name="Rupp O."/>
            <person name="Sabirova J.S."/>
            <person name="Selbitschka W."/>
            <person name="Yakimov M.M."/>
            <person name="Timmis K.N."/>
            <person name="Vorhoelter F.-J."/>
            <person name="Weidner S."/>
            <person name="Kaiser O."/>
            <person name="Golyshin P.N."/>
        </authorList>
    </citation>
    <scope>NUCLEOTIDE SEQUENCE [LARGE SCALE GENOMIC DNA]</scope>
    <source>
        <strain>ATCC 700651 / DSM 11573 / NCIMB 13689 / SK2</strain>
    </source>
</reference>
<organism>
    <name type="scientific">Alcanivorax borkumensis (strain ATCC 700651 / DSM 11573 / NCIMB 13689 / SK2)</name>
    <dbReference type="NCBI Taxonomy" id="393595"/>
    <lineage>
        <taxon>Bacteria</taxon>
        <taxon>Pseudomonadati</taxon>
        <taxon>Pseudomonadota</taxon>
        <taxon>Gammaproteobacteria</taxon>
        <taxon>Oceanospirillales</taxon>
        <taxon>Alcanivoracaceae</taxon>
        <taxon>Alcanivorax</taxon>
    </lineage>
</organism>
<dbReference type="EC" id="2.1.1.166" evidence="1"/>
<dbReference type="EMBL" id="AM286690">
    <property type="protein sequence ID" value="CAL15769.1"/>
    <property type="molecule type" value="Genomic_DNA"/>
</dbReference>
<dbReference type="RefSeq" id="WP_011587617.1">
    <property type="nucleotide sequence ID" value="NC_008260.1"/>
</dbReference>
<dbReference type="SMR" id="Q0VSS9"/>
<dbReference type="STRING" id="393595.ABO_0321"/>
<dbReference type="KEGG" id="abo:ABO_0321"/>
<dbReference type="eggNOG" id="COG0293">
    <property type="taxonomic scope" value="Bacteria"/>
</dbReference>
<dbReference type="HOGENOM" id="CLU_009422_4_0_6"/>
<dbReference type="OrthoDB" id="9790080at2"/>
<dbReference type="Proteomes" id="UP000008871">
    <property type="component" value="Chromosome"/>
</dbReference>
<dbReference type="GO" id="GO:0005737">
    <property type="term" value="C:cytoplasm"/>
    <property type="evidence" value="ECO:0007669"/>
    <property type="project" value="UniProtKB-SubCell"/>
</dbReference>
<dbReference type="GO" id="GO:0008650">
    <property type="term" value="F:rRNA (uridine-2'-O-)-methyltransferase activity"/>
    <property type="evidence" value="ECO:0007669"/>
    <property type="project" value="UniProtKB-UniRule"/>
</dbReference>
<dbReference type="FunFam" id="3.40.50.150:FF:000005">
    <property type="entry name" value="Ribosomal RNA large subunit methyltransferase E"/>
    <property type="match status" value="1"/>
</dbReference>
<dbReference type="Gene3D" id="3.40.50.150">
    <property type="entry name" value="Vaccinia Virus protein VP39"/>
    <property type="match status" value="1"/>
</dbReference>
<dbReference type="HAMAP" id="MF_01547">
    <property type="entry name" value="RNA_methyltr_E"/>
    <property type="match status" value="1"/>
</dbReference>
<dbReference type="InterPro" id="IPR050082">
    <property type="entry name" value="RNA_methyltr_RlmE"/>
</dbReference>
<dbReference type="InterPro" id="IPR002877">
    <property type="entry name" value="RNA_MeTrfase_FtsJ_dom"/>
</dbReference>
<dbReference type="InterPro" id="IPR015507">
    <property type="entry name" value="rRNA-MeTfrase_E"/>
</dbReference>
<dbReference type="InterPro" id="IPR029063">
    <property type="entry name" value="SAM-dependent_MTases_sf"/>
</dbReference>
<dbReference type="NCBIfam" id="NF008390">
    <property type="entry name" value="PRK11188.1"/>
    <property type="match status" value="1"/>
</dbReference>
<dbReference type="PANTHER" id="PTHR10920">
    <property type="entry name" value="RIBOSOMAL RNA METHYLTRANSFERASE"/>
    <property type="match status" value="1"/>
</dbReference>
<dbReference type="PANTHER" id="PTHR10920:SF18">
    <property type="entry name" value="RRNA METHYLTRANSFERASE 2, MITOCHONDRIAL"/>
    <property type="match status" value="1"/>
</dbReference>
<dbReference type="Pfam" id="PF01728">
    <property type="entry name" value="FtsJ"/>
    <property type="match status" value="1"/>
</dbReference>
<dbReference type="PIRSF" id="PIRSF005461">
    <property type="entry name" value="23S_rRNA_mtase"/>
    <property type="match status" value="1"/>
</dbReference>
<dbReference type="SUPFAM" id="SSF53335">
    <property type="entry name" value="S-adenosyl-L-methionine-dependent methyltransferases"/>
    <property type="match status" value="1"/>
</dbReference>
<sequence length="208" mass="23099">MAKSSRSKTSKAWLKEHFNDPWVAKAQEQGYRSRASFKLLEMNEKDRLFRPGMAVLDLGAAPGGWSQVAGQLIGGRGTVIASDILAMDALPDVTFIEGDFREEVIYEQILMALGDQRADLVMSDMAPNMSGNSAVDQPRAMYLAELALDMAERVLEPDGVFLVKVFQGEGFEDYRKALQSRFKRVVSRKPAASRARSTEVYQLGFGLK</sequence>
<evidence type="ECO:0000255" key="1">
    <source>
        <dbReference type="HAMAP-Rule" id="MF_01547"/>
    </source>
</evidence>
<protein>
    <recommendedName>
        <fullName evidence="1">Ribosomal RNA large subunit methyltransferase E</fullName>
        <ecNumber evidence="1">2.1.1.166</ecNumber>
    </recommendedName>
    <alternativeName>
        <fullName evidence="1">23S rRNA Um2552 methyltransferase</fullName>
    </alternativeName>
    <alternativeName>
        <fullName evidence="1">rRNA (uridine-2'-O-)-methyltransferase</fullName>
    </alternativeName>
</protein>
<comment type="function">
    <text evidence="1">Specifically methylates the uridine in position 2552 of 23S rRNA at the 2'-O position of the ribose in the fully assembled 50S ribosomal subunit.</text>
</comment>
<comment type="catalytic activity">
    <reaction evidence="1">
        <text>uridine(2552) in 23S rRNA + S-adenosyl-L-methionine = 2'-O-methyluridine(2552) in 23S rRNA + S-adenosyl-L-homocysteine + H(+)</text>
        <dbReference type="Rhea" id="RHEA:42720"/>
        <dbReference type="Rhea" id="RHEA-COMP:10202"/>
        <dbReference type="Rhea" id="RHEA-COMP:10203"/>
        <dbReference type="ChEBI" id="CHEBI:15378"/>
        <dbReference type="ChEBI" id="CHEBI:57856"/>
        <dbReference type="ChEBI" id="CHEBI:59789"/>
        <dbReference type="ChEBI" id="CHEBI:65315"/>
        <dbReference type="ChEBI" id="CHEBI:74478"/>
        <dbReference type="EC" id="2.1.1.166"/>
    </reaction>
</comment>
<comment type="subcellular location">
    <subcellularLocation>
        <location evidence="1">Cytoplasm</location>
    </subcellularLocation>
</comment>
<comment type="similarity">
    <text evidence="1">Belongs to the class I-like SAM-binding methyltransferase superfamily. RNA methyltransferase RlmE family.</text>
</comment>
<proteinExistence type="inferred from homology"/>
<accession>Q0VSS9</accession>
<gene>
    <name evidence="1" type="primary">rlmE</name>
    <name evidence="1" type="synonym">ftsJ</name>
    <name evidence="1" type="synonym">rrmJ</name>
    <name type="ordered locus">ABO_0321</name>
</gene>
<keyword id="KW-0963">Cytoplasm</keyword>
<keyword id="KW-0489">Methyltransferase</keyword>
<keyword id="KW-1185">Reference proteome</keyword>
<keyword id="KW-0698">rRNA processing</keyword>
<keyword id="KW-0949">S-adenosyl-L-methionine</keyword>
<keyword id="KW-0808">Transferase</keyword>